<dbReference type="EMBL" id="CP001139">
    <property type="protein sequence ID" value="ACH65459.1"/>
    <property type="molecule type" value="Genomic_DNA"/>
</dbReference>
<dbReference type="RefSeq" id="WP_012533067.1">
    <property type="nucleotide sequence ID" value="NC_011184.1"/>
</dbReference>
<dbReference type="SMR" id="B5FAI0"/>
<dbReference type="KEGG" id="vfm:VFMJ11_2202"/>
<dbReference type="HOGENOM" id="CLU_007884_6_1_6"/>
<dbReference type="Proteomes" id="UP000001857">
    <property type="component" value="Chromosome I"/>
</dbReference>
<dbReference type="GO" id="GO:0005737">
    <property type="term" value="C:cytoplasm"/>
    <property type="evidence" value="ECO:0007669"/>
    <property type="project" value="UniProtKB-SubCell"/>
</dbReference>
<dbReference type="GO" id="GO:0005542">
    <property type="term" value="F:folic acid binding"/>
    <property type="evidence" value="ECO:0007669"/>
    <property type="project" value="UniProtKB-UniRule"/>
</dbReference>
<dbReference type="GO" id="GO:0016226">
    <property type="term" value="P:iron-sulfur cluster assembly"/>
    <property type="evidence" value="ECO:0007669"/>
    <property type="project" value="TreeGrafter"/>
</dbReference>
<dbReference type="GO" id="GO:0009451">
    <property type="term" value="P:RNA modification"/>
    <property type="evidence" value="ECO:0007669"/>
    <property type="project" value="InterPro"/>
</dbReference>
<dbReference type="GO" id="GO:0008033">
    <property type="term" value="P:tRNA processing"/>
    <property type="evidence" value="ECO:0007669"/>
    <property type="project" value="UniProtKB-UniRule"/>
</dbReference>
<dbReference type="FunFam" id="3.30.70.1400:FF:000002">
    <property type="entry name" value="tRNA-modifying protein YgfZ"/>
    <property type="match status" value="1"/>
</dbReference>
<dbReference type="Gene3D" id="2.40.30.160">
    <property type="match status" value="1"/>
</dbReference>
<dbReference type="Gene3D" id="3.30.70.1630">
    <property type="match status" value="1"/>
</dbReference>
<dbReference type="Gene3D" id="3.30.70.1400">
    <property type="entry name" value="Aminomethyltransferase beta-barrel domains"/>
    <property type="match status" value="1"/>
</dbReference>
<dbReference type="HAMAP" id="MF_01175">
    <property type="entry name" value="tRNA_modifying_YgfZ"/>
    <property type="match status" value="1"/>
</dbReference>
<dbReference type="InterPro" id="IPR029043">
    <property type="entry name" value="GcvT/YgfZ_C"/>
</dbReference>
<dbReference type="InterPro" id="IPR023758">
    <property type="entry name" value="tRNA-modifying_YgfZ"/>
</dbReference>
<dbReference type="InterPro" id="IPR045179">
    <property type="entry name" value="YgfZ/GcvT"/>
</dbReference>
<dbReference type="InterPro" id="IPR017703">
    <property type="entry name" value="YgfZ/GcvT_CS"/>
</dbReference>
<dbReference type="InterPro" id="IPR048451">
    <property type="entry name" value="YgfZ_barrel"/>
</dbReference>
<dbReference type="NCBIfam" id="NF007110">
    <property type="entry name" value="PRK09559.1"/>
    <property type="match status" value="1"/>
</dbReference>
<dbReference type="NCBIfam" id="TIGR03317">
    <property type="entry name" value="ygfZ_signature"/>
    <property type="match status" value="1"/>
</dbReference>
<dbReference type="PANTHER" id="PTHR22602">
    <property type="entry name" value="TRANSFERASE CAF17, MITOCHONDRIAL-RELATED"/>
    <property type="match status" value="1"/>
</dbReference>
<dbReference type="PANTHER" id="PTHR22602:SF0">
    <property type="entry name" value="TRANSFERASE CAF17, MITOCHONDRIAL-RELATED"/>
    <property type="match status" value="1"/>
</dbReference>
<dbReference type="Pfam" id="PF21130">
    <property type="entry name" value="YgfZ_barrel"/>
    <property type="match status" value="1"/>
</dbReference>
<dbReference type="SUPFAM" id="SSF101790">
    <property type="entry name" value="Aminomethyltransferase beta-barrel domain"/>
    <property type="match status" value="1"/>
</dbReference>
<dbReference type="SUPFAM" id="SSF103025">
    <property type="entry name" value="Folate-binding domain"/>
    <property type="match status" value="1"/>
</dbReference>
<protein>
    <recommendedName>
        <fullName evidence="1">tRNA-modifying protein YgfZ</fullName>
    </recommendedName>
</protein>
<organism>
    <name type="scientific">Aliivibrio fischeri (strain MJ11)</name>
    <name type="common">Vibrio fischeri</name>
    <dbReference type="NCBI Taxonomy" id="388396"/>
    <lineage>
        <taxon>Bacteria</taxon>
        <taxon>Pseudomonadati</taxon>
        <taxon>Pseudomonadota</taxon>
        <taxon>Gammaproteobacteria</taxon>
        <taxon>Vibrionales</taxon>
        <taxon>Vibrionaceae</taxon>
        <taxon>Aliivibrio</taxon>
    </lineage>
</organism>
<proteinExistence type="inferred from homology"/>
<name>YGFZ_ALIFM</name>
<sequence length="318" mass="35720">MMSTLFPTLNLNKDDQLPNFTVSELNDWALITMIGADKKSYLQGQVTCDVVSLAQDEITFGGHCDAKGKLWSIFQLFHHNDGYALFQRKSAIETELTEIKKYAVFSKVDISISDDILLGFTGDKALEWINQHTDSNANVRVSKFGTFAKVSDTQWLLVTTDDKKEELLSLLSEATLCDEAIWSLHHIKHALPQLDDQLCNEHIPQALNLQAINGISFKKGCYTGQETVARAKYRGINKRAMYLLSGISEAQPSAGDAIERSVGENWRKGGTIVSAYRFEDGYTLALAILPNDLDEDTQFKLQESIWEKVELPYTLNDE</sequence>
<keyword id="KW-0963">Cytoplasm</keyword>
<keyword id="KW-0290">Folate-binding</keyword>
<keyword id="KW-0819">tRNA processing</keyword>
<comment type="function">
    <text evidence="1">Folate-binding protein involved in regulating the level of ATP-DnaA and in the modification of some tRNAs. It is probably a key factor in regulatory networks that act via tRNA modification, such as initiation of chromosomal replication.</text>
</comment>
<comment type="subcellular location">
    <subcellularLocation>
        <location evidence="1">Cytoplasm</location>
    </subcellularLocation>
</comment>
<comment type="similarity">
    <text evidence="1">Belongs to the tRNA-modifying YgfZ family.</text>
</comment>
<reference key="1">
    <citation type="submission" date="2008-08" db="EMBL/GenBank/DDBJ databases">
        <title>Complete sequence of Vibrio fischeri strain MJ11.</title>
        <authorList>
            <person name="Mandel M.J."/>
            <person name="Stabb E.V."/>
            <person name="Ruby E.G."/>
            <person name="Ferriera S."/>
            <person name="Johnson J."/>
            <person name="Kravitz S."/>
            <person name="Beeson K."/>
            <person name="Sutton G."/>
            <person name="Rogers Y.-H."/>
            <person name="Friedman R."/>
            <person name="Frazier M."/>
            <person name="Venter J.C."/>
        </authorList>
    </citation>
    <scope>NUCLEOTIDE SEQUENCE [LARGE SCALE GENOMIC DNA]</scope>
    <source>
        <strain>MJ11</strain>
    </source>
</reference>
<evidence type="ECO:0000255" key="1">
    <source>
        <dbReference type="HAMAP-Rule" id="MF_01175"/>
    </source>
</evidence>
<accession>B5FAI0</accession>
<gene>
    <name type="ordered locus">VFMJ11_2202</name>
</gene>
<feature type="chain" id="PRO_1000138088" description="tRNA-modifying protein YgfZ">
    <location>
        <begin position="1"/>
        <end position="318"/>
    </location>
</feature>
<feature type="binding site" evidence="1">
    <location>
        <position position="28"/>
    </location>
    <ligand>
        <name>folate</name>
        <dbReference type="ChEBI" id="CHEBI:62501"/>
    </ligand>
</feature>
<feature type="binding site" evidence="1">
    <location>
        <position position="182"/>
    </location>
    <ligand>
        <name>folate</name>
        <dbReference type="ChEBI" id="CHEBI:62501"/>
    </ligand>
</feature>